<evidence type="ECO:0000255" key="1">
    <source>
        <dbReference type="HAMAP-Rule" id="MF_01008"/>
    </source>
</evidence>
<evidence type="ECO:0000255" key="2">
    <source>
        <dbReference type="PROSITE-ProRule" id="PRU01076"/>
    </source>
</evidence>
<feature type="chain" id="PRO_0000108501" description="Transcriptional regulator MraZ">
    <location>
        <begin position="1"/>
        <end position="142"/>
    </location>
</feature>
<feature type="domain" description="SpoVT-AbrB 1" evidence="2">
    <location>
        <begin position="5"/>
        <end position="47"/>
    </location>
</feature>
<feature type="domain" description="SpoVT-AbrB 2" evidence="2">
    <location>
        <begin position="76"/>
        <end position="119"/>
    </location>
</feature>
<gene>
    <name evidence="1" type="primary">mraZ</name>
    <name type="ordered locus">MYCGA4010</name>
    <name type="ORF">MGA_0030</name>
</gene>
<organism>
    <name type="scientific">Mycoplasmoides gallisepticum (strain R(low / passage 15 / clone 2))</name>
    <name type="common">Mycoplasma gallisepticum</name>
    <dbReference type="NCBI Taxonomy" id="710127"/>
    <lineage>
        <taxon>Bacteria</taxon>
        <taxon>Bacillati</taxon>
        <taxon>Mycoplasmatota</taxon>
        <taxon>Mycoplasmoidales</taxon>
        <taxon>Mycoplasmoidaceae</taxon>
        <taxon>Mycoplasmoides</taxon>
    </lineage>
</organism>
<protein>
    <recommendedName>
        <fullName>Transcriptional regulator MraZ</fullName>
    </recommendedName>
</protein>
<keyword id="KW-0963">Cytoplasm</keyword>
<keyword id="KW-0238">DNA-binding</keyword>
<keyword id="KW-1185">Reference proteome</keyword>
<keyword id="KW-0677">Repeat</keyword>
<keyword id="KW-0804">Transcription</keyword>
<keyword id="KW-0805">Transcription regulation</keyword>
<dbReference type="EMBL" id="AE015450">
    <property type="protein sequence ID" value="AAP56751.2"/>
    <property type="molecule type" value="Genomic_DNA"/>
</dbReference>
<dbReference type="RefSeq" id="WP_011113647.1">
    <property type="nucleotide sequence ID" value="NC_004829.2"/>
</dbReference>
<dbReference type="SMR" id="Q7NB78"/>
<dbReference type="GeneID" id="93510230"/>
<dbReference type="KEGG" id="mga:MGA_0030"/>
<dbReference type="PATRIC" id="fig|233150.7.peg.451"/>
<dbReference type="HOGENOM" id="CLU_107907_0_2_14"/>
<dbReference type="OrthoDB" id="9807753at2"/>
<dbReference type="Proteomes" id="UP000001418">
    <property type="component" value="Chromosome"/>
</dbReference>
<dbReference type="GO" id="GO:0005737">
    <property type="term" value="C:cytoplasm"/>
    <property type="evidence" value="ECO:0007669"/>
    <property type="project" value="UniProtKB-UniRule"/>
</dbReference>
<dbReference type="GO" id="GO:0009295">
    <property type="term" value="C:nucleoid"/>
    <property type="evidence" value="ECO:0007669"/>
    <property type="project" value="UniProtKB-SubCell"/>
</dbReference>
<dbReference type="GO" id="GO:0003700">
    <property type="term" value="F:DNA-binding transcription factor activity"/>
    <property type="evidence" value="ECO:0007669"/>
    <property type="project" value="UniProtKB-UniRule"/>
</dbReference>
<dbReference type="GO" id="GO:0000976">
    <property type="term" value="F:transcription cis-regulatory region binding"/>
    <property type="evidence" value="ECO:0007669"/>
    <property type="project" value="TreeGrafter"/>
</dbReference>
<dbReference type="GO" id="GO:2000143">
    <property type="term" value="P:negative regulation of DNA-templated transcription initiation"/>
    <property type="evidence" value="ECO:0007669"/>
    <property type="project" value="TreeGrafter"/>
</dbReference>
<dbReference type="CDD" id="cd16321">
    <property type="entry name" value="MraZ_C"/>
    <property type="match status" value="1"/>
</dbReference>
<dbReference type="CDD" id="cd16320">
    <property type="entry name" value="MraZ_N"/>
    <property type="match status" value="1"/>
</dbReference>
<dbReference type="Gene3D" id="3.40.1550.20">
    <property type="entry name" value="Transcriptional regulator MraZ domain"/>
    <property type="match status" value="1"/>
</dbReference>
<dbReference type="HAMAP" id="MF_01008">
    <property type="entry name" value="MraZ"/>
    <property type="match status" value="1"/>
</dbReference>
<dbReference type="InterPro" id="IPR003444">
    <property type="entry name" value="MraZ"/>
</dbReference>
<dbReference type="InterPro" id="IPR035644">
    <property type="entry name" value="MraZ_C"/>
</dbReference>
<dbReference type="InterPro" id="IPR020603">
    <property type="entry name" value="MraZ_dom"/>
</dbReference>
<dbReference type="InterPro" id="IPR035642">
    <property type="entry name" value="MraZ_N"/>
</dbReference>
<dbReference type="InterPro" id="IPR038619">
    <property type="entry name" value="MraZ_sf"/>
</dbReference>
<dbReference type="InterPro" id="IPR007159">
    <property type="entry name" value="SpoVT-AbrB_dom"/>
</dbReference>
<dbReference type="InterPro" id="IPR037914">
    <property type="entry name" value="SpoVT-AbrB_sf"/>
</dbReference>
<dbReference type="NCBIfam" id="TIGR00242">
    <property type="entry name" value="division/cell wall cluster transcriptional repressor MraZ"/>
    <property type="match status" value="1"/>
</dbReference>
<dbReference type="PANTHER" id="PTHR34701">
    <property type="entry name" value="TRANSCRIPTIONAL REGULATOR MRAZ"/>
    <property type="match status" value="1"/>
</dbReference>
<dbReference type="PANTHER" id="PTHR34701:SF1">
    <property type="entry name" value="TRANSCRIPTIONAL REGULATOR MRAZ"/>
    <property type="match status" value="1"/>
</dbReference>
<dbReference type="Pfam" id="PF02381">
    <property type="entry name" value="MraZ"/>
    <property type="match status" value="2"/>
</dbReference>
<dbReference type="SUPFAM" id="SSF89447">
    <property type="entry name" value="AbrB/MazE/MraZ-like"/>
    <property type="match status" value="1"/>
</dbReference>
<dbReference type="PROSITE" id="PS51740">
    <property type="entry name" value="SPOVT_ABRB"/>
    <property type="match status" value="2"/>
</dbReference>
<reference key="1">
    <citation type="journal article" date="2003" name="Microbiology">
        <title>The complete genome sequence of the avian pathogen Mycoplasma gallisepticum strain R(low).</title>
        <authorList>
            <person name="Papazisi L."/>
            <person name="Gorton T.S."/>
            <person name="Kutish G."/>
            <person name="Markham P.F."/>
            <person name="Browning G.F."/>
            <person name="Nguyen D.K."/>
            <person name="Swartzell S."/>
            <person name="Madan A."/>
            <person name="Mahairas G."/>
            <person name="Geary S.J."/>
        </authorList>
    </citation>
    <scope>NUCLEOTIDE SEQUENCE [LARGE SCALE GENOMIC DNA]</scope>
    <source>
        <strain>R(low / passage 15 / clone 2)</strain>
    </source>
</reference>
<proteinExistence type="inferred from homology"/>
<accession>Q7NB78</accession>
<comment type="subunit">
    <text evidence="1">Forms oligomers.</text>
</comment>
<comment type="subcellular location">
    <subcellularLocation>
        <location evidence="1">Cytoplasm</location>
        <location evidence="1">Nucleoid</location>
    </subcellularLocation>
</comment>
<comment type="similarity">
    <text evidence="1">Belongs to the MraZ family.</text>
</comment>
<sequence length="142" mass="16399">MFIGNYQHNIDPKGRLSIPSKLRSLIQDSVVLSRGLDGCLELRTNQEFENYANKFLSQSNNKQQNRNYKRLLFANSLTVEIDSANRILIPANFKKMANLSKEVVIIGMGDHIELWDINAYEQFNEANFDKFNELAESMDDDH</sequence>
<name>MRAZ_MYCGA</name>